<comment type="function">
    <text evidence="1">Catalyzes the transfer of a phosphate group to glutamate to form L-glutamate 5-phosphate.</text>
</comment>
<comment type="catalytic activity">
    <reaction evidence="1">
        <text>L-glutamate + ATP = L-glutamyl 5-phosphate + ADP</text>
        <dbReference type="Rhea" id="RHEA:14877"/>
        <dbReference type="ChEBI" id="CHEBI:29985"/>
        <dbReference type="ChEBI" id="CHEBI:30616"/>
        <dbReference type="ChEBI" id="CHEBI:58274"/>
        <dbReference type="ChEBI" id="CHEBI:456216"/>
        <dbReference type="EC" id="2.7.2.11"/>
    </reaction>
</comment>
<comment type="pathway">
    <text evidence="1">Amino-acid biosynthesis; L-proline biosynthesis; L-glutamate 5-semialdehyde from L-glutamate: step 1/2.</text>
</comment>
<comment type="subcellular location">
    <subcellularLocation>
        <location evidence="1">Cytoplasm</location>
    </subcellularLocation>
</comment>
<comment type="similarity">
    <text evidence="1">Belongs to the glutamate 5-kinase family.</text>
</comment>
<sequence>MKRNFDSVKRLVIKIGTSSLVLPSGKINLEKIDQLAFVISSLHNKGIEVVLVSSGAMGFGLNVLDLETRPAEVGKQQAVSSVGQVAMMSLYSQVFSHYQTKVSQLLLTRDVVEYPESLANAINAFESLFELGVVPIVNENDAVSVDEMDHATKFGDNDRLSAIVAKVVGADLLIMLSDIDGLFDKNPNVYEDATLRSYVPEITEEILASAGAAGSKFGTGGMMSKIKSAQMVFENQSQMVLMNGENPRDILRVLEGAKIGTLFKQED</sequence>
<name>PROB_STRT2</name>
<proteinExistence type="inferred from homology"/>
<keyword id="KW-0028">Amino-acid biosynthesis</keyword>
<keyword id="KW-0067">ATP-binding</keyword>
<keyword id="KW-0963">Cytoplasm</keyword>
<keyword id="KW-0418">Kinase</keyword>
<keyword id="KW-0547">Nucleotide-binding</keyword>
<keyword id="KW-0641">Proline biosynthesis</keyword>
<keyword id="KW-1185">Reference proteome</keyword>
<keyword id="KW-0808">Transferase</keyword>
<dbReference type="EC" id="2.7.2.11" evidence="1"/>
<dbReference type="EMBL" id="CP000023">
    <property type="protein sequence ID" value="AAV61310.1"/>
    <property type="molecule type" value="Genomic_DNA"/>
</dbReference>
<dbReference type="RefSeq" id="WP_002948808.1">
    <property type="nucleotide sequence ID" value="NC_006448.1"/>
</dbReference>
<dbReference type="SMR" id="Q5M2U0"/>
<dbReference type="STRING" id="264199.stu1711"/>
<dbReference type="GeneID" id="66899449"/>
<dbReference type="KEGG" id="stl:stu1711"/>
<dbReference type="eggNOG" id="COG0263">
    <property type="taxonomic scope" value="Bacteria"/>
</dbReference>
<dbReference type="HOGENOM" id="CLU_025400_0_2_9"/>
<dbReference type="UniPathway" id="UPA00098">
    <property type="reaction ID" value="UER00359"/>
</dbReference>
<dbReference type="Proteomes" id="UP000001170">
    <property type="component" value="Chromosome"/>
</dbReference>
<dbReference type="GO" id="GO:0005829">
    <property type="term" value="C:cytosol"/>
    <property type="evidence" value="ECO:0007669"/>
    <property type="project" value="TreeGrafter"/>
</dbReference>
<dbReference type="GO" id="GO:0005524">
    <property type="term" value="F:ATP binding"/>
    <property type="evidence" value="ECO:0007669"/>
    <property type="project" value="UniProtKB-KW"/>
</dbReference>
<dbReference type="GO" id="GO:0004349">
    <property type="term" value="F:glutamate 5-kinase activity"/>
    <property type="evidence" value="ECO:0007669"/>
    <property type="project" value="UniProtKB-UniRule"/>
</dbReference>
<dbReference type="GO" id="GO:0055129">
    <property type="term" value="P:L-proline biosynthetic process"/>
    <property type="evidence" value="ECO:0007669"/>
    <property type="project" value="UniProtKB-UniRule"/>
</dbReference>
<dbReference type="CDD" id="cd04242">
    <property type="entry name" value="AAK_G5K_ProB"/>
    <property type="match status" value="1"/>
</dbReference>
<dbReference type="FunFam" id="3.40.1160.10:FF:000018">
    <property type="entry name" value="Glutamate 5-kinase"/>
    <property type="match status" value="1"/>
</dbReference>
<dbReference type="Gene3D" id="3.40.1160.10">
    <property type="entry name" value="Acetylglutamate kinase-like"/>
    <property type="match status" value="1"/>
</dbReference>
<dbReference type="HAMAP" id="MF_00456">
    <property type="entry name" value="ProB"/>
    <property type="match status" value="1"/>
</dbReference>
<dbReference type="InterPro" id="IPR036393">
    <property type="entry name" value="AceGlu_kinase-like_sf"/>
</dbReference>
<dbReference type="InterPro" id="IPR001048">
    <property type="entry name" value="Asp/Glu/Uridylate_kinase"/>
</dbReference>
<dbReference type="InterPro" id="IPR041739">
    <property type="entry name" value="G5K_ProB"/>
</dbReference>
<dbReference type="InterPro" id="IPR001057">
    <property type="entry name" value="Glu/AcGlu_kinase"/>
</dbReference>
<dbReference type="InterPro" id="IPR011529">
    <property type="entry name" value="Glu_5kinase"/>
</dbReference>
<dbReference type="InterPro" id="IPR005715">
    <property type="entry name" value="Glu_5kinase/COase_Synthase"/>
</dbReference>
<dbReference type="InterPro" id="IPR019797">
    <property type="entry name" value="Glutamate_5-kinase_CS"/>
</dbReference>
<dbReference type="NCBIfam" id="TIGR01027">
    <property type="entry name" value="proB"/>
    <property type="match status" value="1"/>
</dbReference>
<dbReference type="PANTHER" id="PTHR43654">
    <property type="entry name" value="GLUTAMATE 5-KINASE"/>
    <property type="match status" value="1"/>
</dbReference>
<dbReference type="PANTHER" id="PTHR43654:SF1">
    <property type="entry name" value="ISOPENTENYL PHOSPHATE KINASE"/>
    <property type="match status" value="1"/>
</dbReference>
<dbReference type="Pfam" id="PF00696">
    <property type="entry name" value="AA_kinase"/>
    <property type="match status" value="1"/>
</dbReference>
<dbReference type="PIRSF" id="PIRSF000729">
    <property type="entry name" value="GK"/>
    <property type="match status" value="1"/>
</dbReference>
<dbReference type="PRINTS" id="PR00474">
    <property type="entry name" value="GLU5KINASE"/>
</dbReference>
<dbReference type="SUPFAM" id="SSF53633">
    <property type="entry name" value="Carbamate kinase-like"/>
    <property type="match status" value="1"/>
</dbReference>
<dbReference type="PROSITE" id="PS00902">
    <property type="entry name" value="GLUTAMATE_5_KINASE"/>
    <property type="match status" value="1"/>
</dbReference>
<protein>
    <recommendedName>
        <fullName evidence="1">Glutamate 5-kinase</fullName>
        <ecNumber evidence="1">2.7.2.11</ecNumber>
    </recommendedName>
    <alternativeName>
        <fullName evidence="1">Gamma-glutamyl kinase</fullName>
        <shortName evidence="1">GK</shortName>
    </alternativeName>
</protein>
<organism>
    <name type="scientific">Streptococcus thermophilus (strain ATCC BAA-250 / LMG 18311)</name>
    <dbReference type="NCBI Taxonomy" id="264199"/>
    <lineage>
        <taxon>Bacteria</taxon>
        <taxon>Bacillati</taxon>
        <taxon>Bacillota</taxon>
        <taxon>Bacilli</taxon>
        <taxon>Lactobacillales</taxon>
        <taxon>Streptococcaceae</taxon>
        <taxon>Streptococcus</taxon>
    </lineage>
</organism>
<gene>
    <name evidence="1" type="primary">proB</name>
    <name type="ordered locus">stu1711</name>
</gene>
<reference key="1">
    <citation type="journal article" date="2004" name="Nat. Biotechnol.">
        <title>Complete sequence and comparative genome analysis of the dairy bacterium Streptococcus thermophilus.</title>
        <authorList>
            <person name="Bolotin A."/>
            <person name="Quinquis B."/>
            <person name="Renault P."/>
            <person name="Sorokin A."/>
            <person name="Ehrlich S.D."/>
            <person name="Kulakauskas S."/>
            <person name="Lapidus A."/>
            <person name="Goltsman E."/>
            <person name="Mazur M."/>
            <person name="Pusch G.D."/>
            <person name="Fonstein M."/>
            <person name="Overbeek R."/>
            <person name="Kyprides N."/>
            <person name="Purnelle B."/>
            <person name="Prozzi D."/>
            <person name="Ngui K."/>
            <person name="Masuy D."/>
            <person name="Hancy F."/>
            <person name="Burteau S."/>
            <person name="Boutry M."/>
            <person name="Delcour J."/>
            <person name="Goffeau A."/>
            <person name="Hols P."/>
        </authorList>
    </citation>
    <scope>NUCLEOTIDE SEQUENCE [LARGE SCALE GENOMIC DNA]</scope>
    <source>
        <strain>ATCC BAA-250 / LMG 18311</strain>
    </source>
</reference>
<accession>Q5M2U0</accession>
<evidence type="ECO:0000255" key="1">
    <source>
        <dbReference type="HAMAP-Rule" id="MF_00456"/>
    </source>
</evidence>
<feature type="chain" id="PRO_0000109740" description="Glutamate 5-kinase">
    <location>
        <begin position="1"/>
        <end position="267"/>
    </location>
</feature>
<feature type="binding site" evidence="1">
    <location>
        <position position="14"/>
    </location>
    <ligand>
        <name>ATP</name>
        <dbReference type="ChEBI" id="CHEBI:30616"/>
    </ligand>
</feature>
<feature type="binding site" evidence="1">
    <location>
        <position position="54"/>
    </location>
    <ligand>
        <name>substrate</name>
    </ligand>
</feature>
<feature type="binding site" evidence="1">
    <location>
        <position position="141"/>
    </location>
    <ligand>
        <name>substrate</name>
    </ligand>
</feature>
<feature type="binding site" evidence="1">
    <location>
        <position position="157"/>
    </location>
    <ligand>
        <name>substrate</name>
    </ligand>
</feature>
<feature type="binding site" evidence="1">
    <location>
        <begin position="177"/>
        <end position="178"/>
    </location>
    <ligand>
        <name>ATP</name>
        <dbReference type="ChEBI" id="CHEBI:30616"/>
    </ligand>
</feature>
<feature type="binding site" evidence="1">
    <location>
        <begin position="219"/>
        <end position="225"/>
    </location>
    <ligand>
        <name>ATP</name>
        <dbReference type="ChEBI" id="CHEBI:30616"/>
    </ligand>
</feature>